<feature type="chain" id="PRO_0000195726" description="Adenylate cyclase">
    <location>
        <begin position="1"/>
        <end position="443"/>
    </location>
</feature>
<feature type="transmembrane region" description="Helical" evidence="2">
    <location>
        <begin position="47"/>
        <end position="69"/>
    </location>
</feature>
<feature type="transmembrane region" description="Helical" evidence="2">
    <location>
        <begin position="74"/>
        <end position="93"/>
    </location>
</feature>
<feature type="transmembrane region" description="Helical" evidence="2">
    <location>
        <begin position="98"/>
        <end position="120"/>
    </location>
</feature>
<feature type="transmembrane region" description="Helical" evidence="2">
    <location>
        <begin position="124"/>
        <end position="143"/>
    </location>
</feature>
<feature type="transmembrane region" description="Helical" evidence="2">
    <location>
        <begin position="148"/>
        <end position="167"/>
    </location>
</feature>
<feature type="transmembrane region" description="Helical" evidence="2">
    <location>
        <begin position="180"/>
        <end position="202"/>
    </location>
</feature>
<feature type="topological domain" description="Cytoplasmic" evidence="2">
    <location>
        <begin position="203"/>
        <end position="443"/>
    </location>
</feature>
<feature type="domain" description="Guanylate cyclase" evidence="3">
    <location>
        <begin position="251"/>
        <end position="378"/>
    </location>
</feature>
<feature type="binding site" evidence="1">
    <location>
        <position position="256"/>
    </location>
    <ligand>
        <name>Mg(2+)</name>
        <dbReference type="ChEBI" id="CHEBI:18420"/>
        <note>catalytic</note>
    </ligand>
</feature>
<feature type="binding site" evidence="1">
    <location>
        <position position="300"/>
    </location>
    <ligand>
        <name>Mg(2+)</name>
        <dbReference type="ChEBI" id="CHEBI:18420"/>
        <note>catalytic</note>
    </ligand>
</feature>
<keyword id="KW-0067">ATP-binding</keyword>
<keyword id="KW-0115">cAMP biosynthesis</keyword>
<keyword id="KW-1003">Cell membrane</keyword>
<keyword id="KW-0456">Lyase</keyword>
<keyword id="KW-0460">Magnesium</keyword>
<keyword id="KW-0464">Manganese</keyword>
<keyword id="KW-0472">Membrane</keyword>
<keyword id="KW-0479">Metal-binding</keyword>
<keyword id="KW-0547">Nucleotide-binding</keyword>
<keyword id="KW-1185">Reference proteome</keyword>
<keyword id="KW-0812">Transmembrane</keyword>
<keyword id="KW-1133">Transmembrane helix</keyword>
<reference key="1">
    <citation type="journal article" date="2003" name="Proc. Natl. Acad. Sci. U.S.A.">
        <title>The complete genome sequence of Mycobacterium bovis.</title>
        <authorList>
            <person name="Garnier T."/>
            <person name="Eiglmeier K."/>
            <person name="Camus J.-C."/>
            <person name="Medina N."/>
            <person name="Mansoor H."/>
            <person name="Pryor M."/>
            <person name="Duthoy S."/>
            <person name="Grondin S."/>
            <person name="Lacroix C."/>
            <person name="Monsempe C."/>
            <person name="Simon S."/>
            <person name="Harris B."/>
            <person name="Atkin R."/>
            <person name="Doggett J."/>
            <person name="Mayes R."/>
            <person name="Keating L."/>
            <person name="Wheeler P.R."/>
            <person name="Parkhill J."/>
            <person name="Barrell B.G."/>
            <person name="Cole S.T."/>
            <person name="Gordon S.V."/>
            <person name="Hewinson R.G."/>
        </authorList>
    </citation>
    <scope>NUCLEOTIDE SEQUENCE [LARGE SCALE GENOMIC DNA]</scope>
    <source>
        <strain>ATCC BAA-935 / AF2122/97</strain>
    </source>
</reference>
<reference key="2">
    <citation type="journal article" date="2017" name="Genome Announc.">
        <title>Updated reference genome sequence and annotation of Mycobacterium bovis AF2122/97.</title>
        <authorList>
            <person name="Malone K.M."/>
            <person name="Farrell D."/>
            <person name="Stuber T.P."/>
            <person name="Schubert O.T."/>
            <person name="Aebersold R."/>
            <person name="Robbe-Austerman S."/>
            <person name="Gordon S.V."/>
        </authorList>
    </citation>
    <scope>NUCLEOTIDE SEQUENCE [LARGE SCALE GENOMIC DNA]</scope>
    <scope>GENOME REANNOTATION</scope>
    <source>
        <strain>ATCC BAA-935 / AF2122/97</strain>
    </source>
</reference>
<dbReference type="EC" id="4.6.1.1" evidence="1"/>
<dbReference type="EMBL" id="LT708304">
    <property type="protein sequence ID" value="SIU00255.1"/>
    <property type="status" value="ALT_INIT"/>
    <property type="molecule type" value="Genomic_DNA"/>
</dbReference>
<dbReference type="RefSeq" id="NP_855304.1">
    <property type="nucleotide sequence ID" value="NC_002945.3"/>
</dbReference>
<dbReference type="RefSeq" id="WP_003408035.1">
    <property type="nucleotide sequence ID" value="NC_002945.4"/>
</dbReference>
<dbReference type="SMR" id="P0A4Y1"/>
<dbReference type="GeneID" id="45425593"/>
<dbReference type="KEGG" id="mbo:BQ2027_MB1651C"/>
<dbReference type="PATRIC" id="fig|233413.5.peg.1802"/>
<dbReference type="Proteomes" id="UP000001419">
    <property type="component" value="Chromosome"/>
</dbReference>
<dbReference type="GO" id="GO:0005886">
    <property type="term" value="C:plasma membrane"/>
    <property type="evidence" value="ECO:0007669"/>
    <property type="project" value="UniProtKB-SubCell"/>
</dbReference>
<dbReference type="GO" id="GO:0004016">
    <property type="term" value="F:adenylate cyclase activity"/>
    <property type="evidence" value="ECO:0007669"/>
    <property type="project" value="UniProtKB-EC"/>
</dbReference>
<dbReference type="GO" id="GO:0005524">
    <property type="term" value="F:ATP binding"/>
    <property type="evidence" value="ECO:0007669"/>
    <property type="project" value="UniProtKB-KW"/>
</dbReference>
<dbReference type="GO" id="GO:0004383">
    <property type="term" value="F:guanylate cyclase activity"/>
    <property type="evidence" value="ECO:0007669"/>
    <property type="project" value="TreeGrafter"/>
</dbReference>
<dbReference type="GO" id="GO:0046872">
    <property type="term" value="F:metal ion binding"/>
    <property type="evidence" value="ECO:0007669"/>
    <property type="project" value="UniProtKB-KW"/>
</dbReference>
<dbReference type="GO" id="GO:0001653">
    <property type="term" value="F:peptide receptor activity"/>
    <property type="evidence" value="ECO:0007669"/>
    <property type="project" value="TreeGrafter"/>
</dbReference>
<dbReference type="GO" id="GO:0006171">
    <property type="term" value="P:cAMP biosynthetic process"/>
    <property type="evidence" value="ECO:0007669"/>
    <property type="project" value="UniProtKB-KW"/>
</dbReference>
<dbReference type="GO" id="GO:0035556">
    <property type="term" value="P:intracellular signal transduction"/>
    <property type="evidence" value="ECO:0007669"/>
    <property type="project" value="InterPro"/>
</dbReference>
<dbReference type="GO" id="GO:0007168">
    <property type="term" value="P:receptor guanylyl cyclase signaling pathway"/>
    <property type="evidence" value="ECO:0007669"/>
    <property type="project" value="TreeGrafter"/>
</dbReference>
<dbReference type="CDD" id="cd07302">
    <property type="entry name" value="CHD"/>
    <property type="match status" value="1"/>
</dbReference>
<dbReference type="FunFam" id="3.30.70.1230:FF:000033">
    <property type="entry name" value="Adenylate cyclase"/>
    <property type="match status" value="1"/>
</dbReference>
<dbReference type="Gene3D" id="3.30.70.1230">
    <property type="entry name" value="Nucleotide cyclase"/>
    <property type="match status" value="1"/>
</dbReference>
<dbReference type="InterPro" id="IPR001054">
    <property type="entry name" value="A/G_cyclase"/>
</dbReference>
<dbReference type="InterPro" id="IPR018297">
    <property type="entry name" value="A/G_cyclase_CS"/>
</dbReference>
<dbReference type="InterPro" id="IPR050401">
    <property type="entry name" value="Cyclic_nucleotide_synthase"/>
</dbReference>
<dbReference type="InterPro" id="IPR048432">
    <property type="entry name" value="MASE7"/>
</dbReference>
<dbReference type="InterPro" id="IPR029787">
    <property type="entry name" value="Nucleotide_cyclase"/>
</dbReference>
<dbReference type="PANTHER" id="PTHR11920:SF335">
    <property type="entry name" value="GUANYLATE CYCLASE"/>
    <property type="match status" value="1"/>
</dbReference>
<dbReference type="PANTHER" id="PTHR11920">
    <property type="entry name" value="GUANYLYL CYCLASE"/>
    <property type="match status" value="1"/>
</dbReference>
<dbReference type="Pfam" id="PF00211">
    <property type="entry name" value="Guanylate_cyc"/>
    <property type="match status" value="1"/>
</dbReference>
<dbReference type="Pfam" id="PF20967">
    <property type="entry name" value="MASE7"/>
    <property type="match status" value="1"/>
</dbReference>
<dbReference type="SMART" id="SM00044">
    <property type="entry name" value="CYCc"/>
    <property type="match status" value="1"/>
</dbReference>
<dbReference type="SUPFAM" id="SSF55073">
    <property type="entry name" value="Nucleotide cyclase"/>
    <property type="match status" value="1"/>
</dbReference>
<dbReference type="PROSITE" id="PS00452">
    <property type="entry name" value="GUANYLATE_CYCLASE_1"/>
    <property type="match status" value="1"/>
</dbReference>
<dbReference type="PROSITE" id="PS50125">
    <property type="entry name" value="GUANYLATE_CYCLASE_2"/>
    <property type="match status" value="1"/>
</dbReference>
<name>CYA1_MYCBO</name>
<organism>
    <name type="scientific">Mycobacterium bovis (strain ATCC BAA-935 / AF2122/97)</name>
    <dbReference type="NCBI Taxonomy" id="233413"/>
    <lineage>
        <taxon>Bacteria</taxon>
        <taxon>Bacillati</taxon>
        <taxon>Actinomycetota</taxon>
        <taxon>Actinomycetes</taxon>
        <taxon>Mycobacteriales</taxon>
        <taxon>Mycobacteriaceae</taxon>
        <taxon>Mycobacterium</taxon>
        <taxon>Mycobacterium tuberculosis complex</taxon>
    </lineage>
</organism>
<gene>
    <name type="primary">cya</name>
    <name type="ordered locus">BQ2027_MB1651C</name>
</gene>
<sequence>MAARKCGAPPIAADGSTRRPDCVTAVRTQARAPTQHYAESVARRQRVLTITAWLAVVVTGSFALMQLATGAGGWYIALINVFTAVTFAIVPLLHRFGGLVAPLTFIGTAYVAIFAIGWDVGTDAGAQFFFLVAAALVVLLVGIEHTALAVGLAAVAAGLVIALEFLVPPDTGLQPPWAMSVSFVLTTVSACGVAVATVWFALRDTARAEAVMEAEHDRSEALLANMLPASIAERLKEPERNIIADKYDEASVLFADIVGFTERASSTAPADLVRFLDRLYSAFDELVDQHGLEKIKVSGDSYMVVSGVPRPRPDHTQALADFALDMTNVAAQLKDPRGNPVPLRVGLATGPVVAGVVGSRRFFYDVWGDAVNVASRMESTDSVGQIQVPDEVYERLKDDFVLRERGHINVKGKGVMRTWYLIGRKVAADPGEVRGAEPRTAGV</sequence>
<evidence type="ECO:0000250" key="1">
    <source>
        <dbReference type="UniProtKB" id="P9WQ35"/>
    </source>
</evidence>
<evidence type="ECO:0000255" key="2"/>
<evidence type="ECO:0000255" key="3">
    <source>
        <dbReference type="PROSITE-ProRule" id="PRU00099"/>
    </source>
</evidence>
<evidence type="ECO:0000305" key="4"/>
<protein>
    <recommendedName>
        <fullName>Adenylate cyclase</fullName>
        <ecNumber evidence="1">4.6.1.1</ecNumber>
    </recommendedName>
    <alternativeName>
        <fullName>ATP pyrophosphate-lyase</fullName>
    </alternativeName>
    <alternativeName>
        <fullName>Adenylyl cyclase</fullName>
    </alternativeName>
</protein>
<accession>P0A4Y1</accession>
<accession>A0A1R3XYV0</accession>
<accession>O06142</accession>
<accession>O30820</accession>
<accession>X2BIV0</accession>
<proteinExistence type="inferred from homology"/>
<comment type="catalytic activity">
    <reaction evidence="1">
        <text>ATP = 3',5'-cyclic AMP + diphosphate</text>
        <dbReference type="Rhea" id="RHEA:15389"/>
        <dbReference type="ChEBI" id="CHEBI:30616"/>
        <dbReference type="ChEBI" id="CHEBI:33019"/>
        <dbReference type="ChEBI" id="CHEBI:58165"/>
        <dbReference type="EC" id="4.6.1.1"/>
    </reaction>
</comment>
<comment type="cofactor">
    <cofactor evidence="1">
        <name>Mg(2+)</name>
        <dbReference type="ChEBI" id="CHEBI:18420"/>
    </cofactor>
    <cofactor evidence="1">
        <name>Mn(2+)</name>
        <dbReference type="ChEBI" id="CHEBI:29035"/>
    </cofactor>
    <text evidence="1">Binds 1 Mg(2+) ion per subunit. Is also active with manganese ions (in vitro).</text>
</comment>
<comment type="subunit">
    <text evidence="1">Homodimer. Can also exist as monomer.</text>
</comment>
<comment type="subcellular location">
    <subcellularLocation>
        <location evidence="1">Cell membrane</location>
        <topology evidence="1">Multi-pass membrane protein</topology>
    </subcellularLocation>
</comment>
<comment type="similarity">
    <text evidence="3">Belongs to the adenylyl cyclase class-4/guanylyl cyclase family.</text>
</comment>
<comment type="sequence caution" evidence="4">
    <conflict type="erroneous initiation">
        <sequence resource="EMBL-CDS" id="SIU00255"/>
    </conflict>
    <text>Truncated N-terminus.</text>
</comment>